<sequence>CKLMAFSSINHLGWMLLAMMNNELLWMTYFLLYSLLSISIIMMFNNFKLFYFNQIFNISMMNPIIKFLIFLNLLSLGGLPPFLGFLPKWLVIQNLTSMNQLFILTISVCLTLITLYFYLRLSYSIFMLNYQKNTWMLKNIYSMKMSSMSLILNFISIGGLLMILMFYMIL</sequence>
<protein>
    <recommendedName>
        <fullName>NADH-ubiquinone oxidoreductase chain 2</fullName>
        <ecNumber>7.1.1.2</ecNumber>
    </recommendedName>
    <alternativeName>
        <fullName>NADH dehydrogenase subunit 2</fullName>
    </alternativeName>
</protein>
<name>NU2M_ANOAL</name>
<accession>Q33636</accession>
<geneLocation type="mitochondrion"/>
<feature type="chain" id="PRO_0000117547" description="NADH-ubiquinone oxidoreductase chain 2">
    <location>
        <begin position="1" status="less than"/>
        <end position="170"/>
    </location>
</feature>
<feature type="transmembrane region" description="Helical" evidence="2">
    <location>
        <begin position="24"/>
        <end position="44"/>
    </location>
</feature>
<feature type="transmembrane region" description="Helical" evidence="2">
    <location>
        <begin position="67"/>
        <end position="87"/>
    </location>
</feature>
<feature type="transmembrane region" description="Helical" evidence="2">
    <location>
        <begin position="101"/>
        <end position="121"/>
    </location>
</feature>
<feature type="transmembrane region" description="Helical" evidence="2">
    <location>
        <begin position="150"/>
        <end position="170"/>
    </location>
</feature>
<feature type="non-terminal residue">
    <location>
        <position position="1"/>
    </location>
</feature>
<gene>
    <name type="primary">ND2</name>
</gene>
<dbReference type="EC" id="7.1.1.2"/>
<dbReference type="EMBL" id="U35258">
    <property type="protein sequence ID" value="AAA79928.1"/>
    <property type="molecule type" value="Genomic_DNA"/>
</dbReference>
<dbReference type="SMR" id="Q33636"/>
<dbReference type="STRING" id="7167.Q33636"/>
<dbReference type="Proteomes" id="UP000069272">
    <property type="component" value="Unassembled WGS sequence"/>
</dbReference>
<dbReference type="GO" id="GO:0005743">
    <property type="term" value="C:mitochondrial inner membrane"/>
    <property type="evidence" value="ECO:0007669"/>
    <property type="project" value="UniProtKB-SubCell"/>
</dbReference>
<dbReference type="GO" id="GO:0008137">
    <property type="term" value="F:NADH dehydrogenase (ubiquinone) activity"/>
    <property type="evidence" value="ECO:0007669"/>
    <property type="project" value="UniProtKB-EC"/>
</dbReference>
<dbReference type="GO" id="GO:0006120">
    <property type="term" value="P:mitochondrial electron transport, NADH to ubiquinone"/>
    <property type="evidence" value="ECO:0007669"/>
    <property type="project" value="InterPro"/>
</dbReference>
<dbReference type="InterPro" id="IPR050175">
    <property type="entry name" value="Complex_I_Subunit_2"/>
</dbReference>
<dbReference type="InterPro" id="IPR010933">
    <property type="entry name" value="NADH_DH_su2_C"/>
</dbReference>
<dbReference type="InterPro" id="IPR003917">
    <property type="entry name" value="NADH_UbQ_OxRdtase_chain2"/>
</dbReference>
<dbReference type="InterPro" id="IPR001750">
    <property type="entry name" value="ND/Mrp_TM"/>
</dbReference>
<dbReference type="PANTHER" id="PTHR46552">
    <property type="entry name" value="NADH-UBIQUINONE OXIDOREDUCTASE CHAIN 2"/>
    <property type="match status" value="1"/>
</dbReference>
<dbReference type="PANTHER" id="PTHR46552:SF1">
    <property type="entry name" value="NADH-UBIQUINONE OXIDOREDUCTASE CHAIN 2"/>
    <property type="match status" value="1"/>
</dbReference>
<dbReference type="Pfam" id="PF06444">
    <property type="entry name" value="NADH_dehy_S2_C"/>
    <property type="match status" value="1"/>
</dbReference>
<dbReference type="Pfam" id="PF00361">
    <property type="entry name" value="Proton_antipo_M"/>
    <property type="match status" value="1"/>
</dbReference>
<dbReference type="PRINTS" id="PR01436">
    <property type="entry name" value="NADHDHGNASE2"/>
</dbReference>
<organism>
    <name type="scientific">Anopheles albimanus</name>
    <name type="common">New world malaria mosquito</name>
    <dbReference type="NCBI Taxonomy" id="7167"/>
    <lineage>
        <taxon>Eukaryota</taxon>
        <taxon>Metazoa</taxon>
        <taxon>Ecdysozoa</taxon>
        <taxon>Arthropoda</taxon>
        <taxon>Hexapoda</taxon>
        <taxon>Insecta</taxon>
        <taxon>Pterygota</taxon>
        <taxon>Neoptera</taxon>
        <taxon>Endopterygota</taxon>
        <taxon>Diptera</taxon>
        <taxon>Nematocera</taxon>
        <taxon>Culicoidea</taxon>
        <taxon>Culicidae</taxon>
        <taxon>Anophelinae</taxon>
        <taxon>Anopheles</taxon>
    </lineage>
</organism>
<comment type="function">
    <text evidence="1">Core subunit of the mitochondrial membrane respiratory chain NADH dehydrogenase (Complex I) that is believed to belong to the minimal assembly required for catalysis. Complex I functions in the transfer of electrons from NADH to the respiratory chain. The immediate electron acceptor for the enzyme is believed to be ubiquinone (By similarity).</text>
</comment>
<comment type="catalytic activity">
    <reaction>
        <text>a ubiquinone + NADH + 5 H(+)(in) = a ubiquinol + NAD(+) + 4 H(+)(out)</text>
        <dbReference type="Rhea" id="RHEA:29091"/>
        <dbReference type="Rhea" id="RHEA-COMP:9565"/>
        <dbReference type="Rhea" id="RHEA-COMP:9566"/>
        <dbReference type="ChEBI" id="CHEBI:15378"/>
        <dbReference type="ChEBI" id="CHEBI:16389"/>
        <dbReference type="ChEBI" id="CHEBI:17976"/>
        <dbReference type="ChEBI" id="CHEBI:57540"/>
        <dbReference type="ChEBI" id="CHEBI:57945"/>
        <dbReference type="EC" id="7.1.1.2"/>
    </reaction>
</comment>
<comment type="subcellular location">
    <subcellularLocation>
        <location>Mitochondrion inner membrane</location>
        <topology>Multi-pass membrane protein</topology>
    </subcellularLocation>
</comment>
<comment type="similarity">
    <text evidence="3">Belongs to the complex I subunit 2 family.</text>
</comment>
<reference key="1">
    <citation type="submission" date="1995-10" db="EMBL/GenBank/DDBJ databases">
        <authorList>
            <person name="Perera O.P."/>
            <person name="Cockburn A.F."/>
            <person name="Conn J.E."/>
            <person name="Seawright J.A."/>
        </authorList>
    </citation>
    <scope>NUCLEOTIDE SEQUENCE [GENOMIC DNA]</scope>
</reference>
<proteinExistence type="inferred from homology"/>
<evidence type="ECO:0000250" key="1"/>
<evidence type="ECO:0000255" key="2"/>
<evidence type="ECO:0000305" key="3"/>
<keyword id="KW-0249">Electron transport</keyword>
<keyword id="KW-0472">Membrane</keyword>
<keyword id="KW-0496">Mitochondrion</keyword>
<keyword id="KW-0999">Mitochondrion inner membrane</keyword>
<keyword id="KW-0520">NAD</keyword>
<keyword id="KW-0679">Respiratory chain</keyword>
<keyword id="KW-1278">Translocase</keyword>
<keyword id="KW-0812">Transmembrane</keyword>
<keyword id="KW-1133">Transmembrane helix</keyword>
<keyword id="KW-0813">Transport</keyword>
<keyword id="KW-0830">Ubiquinone</keyword>